<reference evidence="11" key="1">
    <citation type="journal article" date="2000" name="Science">
        <title>The genome sequence of Drosophila melanogaster.</title>
        <authorList>
            <person name="Adams M.D."/>
            <person name="Celniker S.E."/>
            <person name="Holt R.A."/>
            <person name="Evans C.A."/>
            <person name="Gocayne J.D."/>
            <person name="Amanatides P.G."/>
            <person name="Scherer S.E."/>
            <person name="Li P.W."/>
            <person name="Hoskins R.A."/>
            <person name="Galle R.F."/>
            <person name="George R.A."/>
            <person name="Lewis S.E."/>
            <person name="Richards S."/>
            <person name="Ashburner M."/>
            <person name="Henderson S.N."/>
            <person name="Sutton G.G."/>
            <person name="Wortman J.R."/>
            <person name="Yandell M.D."/>
            <person name="Zhang Q."/>
            <person name="Chen L.X."/>
            <person name="Brandon R.C."/>
            <person name="Rogers Y.-H.C."/>
            <person name="Blazej R.G."/>
            <person name="Champe M."/>
            <person name="Pfeiffer B.D."/>
            <person name="Wan K.H."/>
            <person name="Doyle C."/>
            <person name="Baxter E.G."/>
            <person name="Helt G."/>
            <person name="Nelson C.R."/>
            <person name="Miklos G.L.G."/>
            <person name="Abril J.F."/>
            <person name="Agbayani A."/>
            <person name="An H.-J."/>
            <person name="Andrews-Pfannkoch C."/>
            <person name="Baldwin D."/>
            <person name="Ballew R.M."/>
            <person name="Basu A."/>
            <person name="Baxendale J."/>
            <person name="Bayraktaroglu L."/>
            <person name="Beasley E.M."/>
            <person name="Beeson K.Y."/>
            <person name="Benos P.V."/>
            <person name="Berman B.P."/>
            <person name="Bhandari D."/>
            <person name="Bolshakov S."/>
            <person name="Borkova D."/>
            <person name="Botchan M.R."/>
            <person name="Bouck J."/>
            <person name="Brokstein P."/>
            <person name="Brottier P."/>
            <person name="Burtis K.C."/>
            <person name="Busam D.A."/>
            <person name="Butler H."/>
            <person name="Cadieu E."/>
            <person name="Center A."/>
            <person name="Chandra I."/>
            <person name="Cherry J.M."/>
            <person name="Cawley S."/>
            <person name="Dahlke C."/>
            <person name="Davenport L.B."/>
            <person name="Davies P."/>
            <person name="de Pablos B."/>
            <person name="Delcher A."/>
            <person name="Deng Z."/>
            <person name="Mays A.D."/>
            <person name="Dew I."/>
            <person name="Dietz S.M."/>
            <person name="Dodson K."/>
            <person name="Doup L.E."/>
            <person name="Downes M."/>
            <person name="Dugan-Rocha S."/>
            <person name="Dunkov B.C."/>
            <person name="Dunn P."/>
            <person name="Durbin K.J."/>
            <person name="Evangelista C.C."/>
            <person name="Ferraz C."/>
            <person name="Ferriera S."/>
            <person name="Fleischmann W."/>
            <person name="Fosler C."/>
            <person name="Gabrielian A.E."/>
            <person name="Garg N.S."/>
            <person name="Gelbart W.M."/>
            <person name="Glasser K."/>
            <person name="Glodek A."/>
            <person name="Gong F."/>
            <person name="Gorrell J.H."/>
            <person name="Gu Z."/>
            <person name="Guan P."/>
            <person name="Harris M."/>
            <person name="Harris N.L."/>
            <person name="Harvey D.A."/>
            <person name="Heiman T.J."/>
            <person name="Hernandez J.R."/>
            <person name="Houck J."/>
            <person name="Hostin D."/>
            <person name="Houston K.A."/>
            <person name="Howland T.J."/>
            <person name="Wei M.-H."/>
            <person name="Ibegwam C."/>
            <person name="Jalali M."/>
            <person name="Kalush F."/>
            <person name="Karpen G.H."/>
            <person name="Ke Z."/>
            <person name="Kennison J.A."/>
            <person name="Ketchum K.A."/>
            <person name="Kimmel B.E."/>
            <person name="Kodira C.D."/>
            <person name="Kraft C.L."/>
            <person name="Kravitz S."/>
            <person name="Kulp D."/>
            <person name="Lai Z."/>
            <person name="Lasko P."/>
            <person name="Lei Y."/>
            <person name="Levitsky A.A."/>
            <person name="Li J.H."/>
            <person name="Li Z."/>
            <person name="Liang Y."/>
            <person name="Lin X."/>
            <person name="Liu X."/>
            <person name="Mattei B."/>
            <person name="McIntosh T.C."/>
            <person name="McLeod M.P."/>
            <person name="McPherson D."/>
            <person name="Merkulov G."/>
            <person name="Milshina N.V."/>
            <person name="Mobarry C."/>
            <person name="Morris J."/>
            <person name="Moshrefi A."/>
            <person name="Mount S.M."/>
            <person name="Moy M."/>
            <person name="Murphy B."/>
            <person name="Murphy L."/>
            <person name="Muzny D.M."/>
            <person name="Nelson D.L."/>
            <person name="Nelson D.R."/>
            <person name="Nelson K.A."/>
            <person name="Nixon K."/>
            <person name="Nusskern D.R."/>
            <person name="Pacleb J.M."/>
            <person name="Palazzolo M."/>
            <person name="Pittman G.S."/>
            <person name="Pan S."/>
            <person name="Pollard J."/>
            <person name="Puri V."/>
            <person name="Reese M.G."/>
            <person name="Reinert K."/>
            <person name="Remington K."/>
            <person name="Saunders R.D.C."/>
            <person name="Scheeler F."/>
            <person name="Shen H."/>
            <person name="Shue B.C."/>
            <person name="Siden-Kiamos I."/>
            <person name="Simpson M."/>
            <person name="Skupski M.P."/>
            <person name="Smith T.J."/>
            <person name="Spier E."/>
            <person name="Spradling A.C."/>
            <person name="Stapleton M."/>
            <person name="Strong R."/>
            <person name="Sun E."/>
            <person name="Svirskas R."/>
            <person name="Tector C."/>
            <person name="Turner R."/>
            <person name="Venter E."/>
            <person name="Wang A.H."/>
            <person name="Wang X."/>
            <person name="Wang Z.-Y."/>
            <person name="Wassarman D.A."/>
            <person name="Weinstock G.M."/>
            <person name="Weissenbach J."/>
            <person name="Williams S.M."/>
            <person name="Woodage T."/>
            <person name="Worley K.C."/>
            <person name="Wu D."/>
            <person name="Yang S."/>
            <person name="Yao Q.A."/>
            <person name="Ye J."/>
            <person name="Yeh R.-F."/>
            <person name="Zaveri J.S."/>
            <person name="Zhan M."/>
            <person name="Zhang G."/>
            <person name="Zhao Q."/>
            <person name="Zheng L."/>
            <person name="Zheng X.H."/>
            <person name="Zhong F.N."/>
            <person name="Zhong W."/>
            <person name="Zhou X."/>
            <person name="Zhu S.C."/>
            <person name="Zhu X."/>
            <person name="Smith H.O."/>
            <person name="Gibbs R.A."/>
            <person name="Myers E.W."/>
            <person name="Rubin G.M."/>
            <person name="Venter J.C."/>
        </authorList>
    </citation>
    <scope>NUCLEOTIDE SEQUENCE [LARGE SCALE GENOMIC DNA]</scope>
    <source>
        <strain evidence="11">Berkeley</strain>
    </source>
</reference>
<reference evidence="11" key="2">
    <citation type="journal article" date="2002" name="Genome Biol.">
        <title>Annotation of the Drosophila melanogaster euchromatic genome: a systematic review.</title>
        <authorList>
            <person name="Misra S."/>
            <person name="Crosby M.A."/>
            <person name="Mungall C.J."/>
            <person name="Matthews B.B."/>
            <person name="Campbell K.S."/>
            <person name="Hradecky P."/>
            <person name="Huang Y."/>
            <person name="Kaminker J.S."/>
            <person name="Millburn G.H."/>
            <person name="Prochnik S.E."/>
            <person name="Smith C.D."/>
            <person name="Tupy J.L."/>
            <person name="Whitfield E.J."/>
            <person name="Bayraktaroglu L."/>
            <person name="Berman B.P."/>
            <person name="Bettencourt B.R."/>
            <person name="Celniker S.E."/>
            <person name="de Grey A.D.N.J."/>
            <person name="Drysdale R.A."/>
            <person name="Harris N.L."/>
            <person name="Richter J."/>
            <person name="Russo S."/>
            <person name="Schroeder A.J."/>
            <person name="Shu S.Q."/>
            <person name="Stapleton M."/>
            <person name="Yamada C."/>
            <person name="Ashburner M."/>
            <person name="Gelbart W.M."/>
            <person name="Rubin G.M."/>
            <person name="Lewis S.E."/>
        </authorList>
    </citation>
    <scope>GENOME REANNOTATION</scope>
    <source>
        <strain evidence="11">Berkeley</strain>
    </source>
</reference>
<reference evidence="7" key="3">
    <citation type="journal article" date="2009" name="Curr. Biol.">
        <title>Sulfation of eggshell components by Pipe defines dorsal-ventral polarity in the Drosophila embryo.</title>
        <authorList>
            <person name="Zhang Z."/>
            <person name="Stevens L.M."/>
            <person name="Stein D."/>
        </authorList>
    </citation>
    <scope>FUNCTION</scope>
    <scope>SUBCELLULAR LOCATION</scope>
    <scope>TISSUE SPECIFICITY</scope>
    <scope>SULFATION</scope>
    <scope>DISRUPTION PHENOTYPE</scope>
    <scope>IDENTIFICATION BY MASS SPECTROMETRY</scope>
</reference>
<reference evidence="7" key="4">
    <citation type="journal article" date="2010" name="Dev. Biol.">
        <title>Drosophila vitelline membrane assembly: a critical role for an evolutionarily conserved cysteine in the 'VM domain' of sV23.</title>
        <authorList>
            <person name="Wu T."/>
            <person name="Manogaran A.L."/>
            <person name="Beauchamp J.M."/>
            <person name="Waring G.L."/>
        </authorList>
    </citation>
    <scope>INTERACTION WITH VM26AA AND VM26AB</scope>
    <scope>DISULFIDE BOND</scope>
</reference>
<organism evidence="11">
    <name type="scientific">Drosophila melanogaster</name>
    <name type="common">Fruit fly</name>
    <dbReference type="NCBI Taxonomy" id="7227"/>
    <lineage>
        <taxon>Eukaryota</taxon>
        <taxon>Metazoa</taxon>
        <taxon>Ecdysozoa</taxon>
        <taxon>Arthropoda</taxon>
        <taxon>Hexapoda</taxon>
        <taxon>Insecta</taxon>
        <taxon>Pterygota</taxon>
        <taxon>Neoptera</taxon>
        <taxon>Endopterygota</taxon>
        <taxon>Diptera</taxon>
        <taxon>Brachycera</taxon>
        <taxon>Muscomorpha</taxon>
        <taxon>Ephydroidea</taxon>
        <taxon>Drosophilidae</taxon>
        <taxon>Drosophila</taxon>
        <taxon>Sophophora</taxon>
    </lineage>
</organism>
<protein>
    <recommendedName>
        <fullName evidence="10">Vitelline membrane-like protein</fullName>
    </recommendedName>
</protein>
<keyword id="KW-1015">Disulfide bond</keyword>
<keyword id="KW-0272">Extracellular matrix</keyword>
<keyword id="KW-1185">Reference proteome</keyword>
<keyword id="KW-0964">Secreted</keyword>
<keyword id="KW-0732">Signal</keyword>
<dbReference type="EMBL" id="AE014298">
    <property type="protein sequence ID" value="ABW09327.1"/>
    <property type="molecule type" value="Genomic_DNA"/>
</dbReference>
<dbReference type="EMBL" id="AE014298">
    <property type="protein sequence ID" value="ALI51140.1"/>
    <property type="molecule type" value="Genomic_DNA"/>
</dbReference>
<dbReference type="RefSeq" id="NP_001096866.1">
    <property type="nucleotide sequence ID" value="NM_001103396.2"/>
</dbReference>
<dbReference type="RefSeq" id="NP_001303573.1">
    <property type="nucleotide sequence ID" value="NM_001316644.1"/>
</dbReference>
<dbReference type="FunCoup" id="A8JUV4">
    <property type="interactions" value="4"/>
</dbReference>
<dbReference type="STRING" id="7227.FBpp0312534"/>
<dbReference type="PaxDb" id="7227-FBpp0111447"/>
<dbReference type="EnsemblMetazoa" id="FBtr0112535">
    <property type="protein sequence ID" value="FBpp0111447"/>
    <property type="gene ID" value="FBgn0085362"/>
</dbReference>
<dbReference type="EnsemblMetazoa" id="FBtr0347302">
    <property type="protein sequence ID" value="FBpp0312534"/>
    <property type="gene ID" value="FBgn0085362"/>
</dbReference>
<dbReference type="GeneID" id="5740271"/>
<dbReference type="KEGG" id="dme:Dmel_CG34333"/>
<dbReference type="UCSC" id="CG34333-RA">
    <property type="organism name" value="d. melanogaster"/>
</dbReference>
<dbReference type="AGR" id="FB:FBgn0085362"/>
<dbReference type="CTD" id="5740271"/>
<dbReference type="FlyBase" id="FBgn0085362">
    <property type="gene designation" value="Vml"/>
</dbReference>
<dbReference type="VEuPathDB" id="VectorBase:FBgn0085362"/>
<dbReference type="eggNOG" id="ENOG502S3G1">
    <property type="taxonomic scope" value="Eukaryota"/>
</dbReference>
<dbReference type="GeneTree" id="ENSGT00800000124892"/>
<dbReference type="HOGENOM" id="CLU_022392_0_0_1"/>
<dbReference type="InParanoid" id="A8JUV4"/>
<dbReference type="OMA" id="DSGVHNV"/>
<dbReference type="OrthoDB" id="7873252at2759"/>
<dbReference type="BioGRID-ORCS" id="5740271">
    <property type="hits" value="0 hits in 1 CRISPR screen"/>
</dbReference>
<dbReference type="Proteomes" id="UP000000803">
    <property type="component" value="Chromosome X"/>
</dbReference>
<dbReference type="Bgee" id="FBgn0085362">
    <property type="expression patterns" value="Expressed in ovarian sheath cell (Drosophila) in ovary and 21 other cell types or tissues"/>
</dbReference>
<dbReference type="GO" id="GO:0035805">
    <property type="term" value="C:egg coat"/>
    <property type="evidence" value="ECO:0000255"/>
    <property type="project" value="FlyBase"/>
</dbReference>
<dbReference type="GO" id="GO:0005576">
    <property type="term" value="C:extracellular region"/>
    <property type="evidence" value="ECO:0007669"/>
    <property type="project" value="UniProtKB-SubCell"/>
</dbReference>
<dbReference type="GO" id="GO:0060388">
    <property type="term" value="C:vitelline envelope"/>
    <property type="evidence" value="ECO:0000314"/>
    <property type="project" value="FlyBase"/>
</dbReference>
<dbReference type="GO" id="GO:0008316">
    <property type="term" value="F:structural constituent of vitelline membrane"/>
    <property type="evidence" value="ECO:0000255"/>
    <property type="project" value="FlyBase"/>
</dbReference>
<dbReference type="GO" id="GO:0009950">
    <property type="term" value="P:dorsal/ventral axis specification"/>
    <property type="evidence" value="ECO:0000316"/>
    <property type="project" value="FlyBase"/>
</dbReference>
<dbReference type="GO" id="GO:0007305">
    <property type="term" value="P:vitelline membrane formation involved in chorion-containing eggshell formation"/>
    <property type="evidence" value="ECO:0000255"/>
    <property type="project" value="FlyBase"/>
</dbReference>
<dbReference type="InterPro" id="IPR013135">
    <property type="entry name" value="Vitelline_membr_Cys-rich-dom"/>
</dbReference>
<dbReference type="PANTHER" id="PTHR47641:SF1">
    <property type="entry name" value="GOLGI-ASSOCIATED OLFACTORY SIGNALING REGULATOR"/>
    <property type="match status" value="1"/>
</dbReference>
<dbReference type="PANTHER" id="PTHR47641">
    <property type="entry name" value="PERIAXIN-LIKE"/>
    <property type="match status" value="1"/>
</dbReference>
<dbReference type="PROSITE" id="PS51137">
    <property type="entry name" value="VM"/>
    <property type="match status" value="1"/>
</dbReference>
<sequence length="578" mass="56116">MCGRRLLFLAAFGCLLANAFSLPATRNEEFDDGFPESEFDYEERHTREIPAQAYAPPIVYNSQSSYSPAKDQGYSAPAAPVYSPAAPSYSAPAAPSYSAPAAPSYSAPAAPSYSAPAAPSYSAPAAPSYSAPASSSYSAPAAPSYSAPAAPSYSAPAAPSYSAPASSSYSAPAAPSYSAPAAPSYSAPAAPSYSAPAAPSYSAPAAPSYSAPAAPSYSAPSAPSYSAQKTSSYSAPAAPSYHAPAAPASSYSAPAGPSYSAPAAPSYSAPSYSAPASSYSALKAPSYSAPAAPSYSAPAAPSYSSSASPSYSSPASSSYSAPAAPTYSAPKAQSYSAPAAPSYSAPAAPSYSAPASSSYSAPAAPSYSAPAAPSYSAPAAPSYSAPASSSYSAPAAPSYSAPAAPSYSAPASSSYSAPAAPSYSAPAAPSYSAPAAPSYSAPAAPSYSAPASSGYSAARAYSAGSAAPASGYSAPKTSSGYSAPASSGSPAASSYSAPASSTASSGYSAPASKSSGYARSEMDHQILGMARTAGGYGSAAPSAAYGAASLPSPPCPKNYVFSCSSVFTPAPCSQGYGY</sequence>
<feature type="signal peptide" evidence="1">
    <location>
        <begin position="1"/>
        <end position="21"/>
    </location>
</feature>
<feature type="chain" id="PRO_5015086652" description="Vitelline membrane-like protein" evidence="1">
    <location>
        <begin position="22"/>
        <end position="578"/>
    </location>
</feature>
<feature type="domain" description="VM" evidence="2">
    <location>
        <begin position="549"/>
        <end position="578"/>
    </location>
</feature>
<feature type="region of interest" description="45 X 8 AA approximate tandem repeats of [PS]-[AS]-Y-S-A-P-A-[AS]" evidence="9">
    <location>
        <begin position="72"/>
        <end position="452"/>
    </location>
</feature>
<feature type="region of interest" description="Disordered" evidence="3">
    <location>
        <begin position="133"/>
        <end position="442"/>
    </location>
</feature>
<feature type="region of interest" description="Disordered" evidence="3">
    <location>
        <begin position="487"/>
        <end position="514"/>
    </location>
</feature>
<proteinExistence type="evidence at protein level"/>
<accession>A8JUV4</accession>
<comment type="function">
    <text evidence="4">Major early eggshell protein secreted by folicle cells into the perivitelline space and incorporated into the vitelline membrane (PubMed:19540119). Localized sulfation by pip may be involved in embryo dorsal-ventral axis determination (PubMed:19540119).</text>
</comment>
<comment type="subunit">
    <text evidence="5">Interacts with Vm26Aa and Vm26Ab; forms part of a disulfide-linked network within the vitelline membrane of stage 10 egg chambers.</text>
</comment>
<comment type="subcellular location">
    <subcellularLocation>
        <location evidence="4">Secreted</location>
    </subcellularLocation>
    <subcellularLocation>
        <location evidence="4">Secreted</location>
        <location evidence="4">Extracellular space</location>
        <location evidence="4">Extracellular matrix</location>
    </subcellularLocation>
    <text evidence="4">Secreted into the perivitelline space by follicle cells and becomes incorporated into the vitelline membrane.</text>
</comment>
<comment type="tissue specificity">
    <text evidence="4">Secreted into the perivitelline space and becomes stably incorporated into the vitelline membrane (at protein level) (PubMed:19540119). Expressed throughout the follicle cell layer of stage 10 egg chambers (PubMed:19540119).</text>
</comment>
<comment type="PTM">
    <text evidence="5">Becomes part of a disulfide-linked network including other vitelline membrane proteins, including Vm26Aa and Vm26Ab, during vitelline membrane biogenesis and maturation.</text>
</comment>
<comment type="PTM">
    <text evidence="4 8">Sulfated by pip; probably involved in embryo dorsal-ventral axis determination (PubMed:19540119). Sulfation by pip may occur on covalently bound glycosaminoglycans (Probable).</text>
</comment>
<comment type="disruption phenotype">
    <text evidence="4">No effect on offspring viability; function may be redundant with that of other eggshell components (PubMed:19540119). Dramatic increase in embryo dorsalization; when combined with mutation of pip (PubMed:19540119).</text>
</comment>
<evidence type="ECO:0000255" key="1"/>
<evidence type="ECO:0000255" key="2">
    <source>
        <dbReference type="PROSITE-ProRule" id="PRU00483"/>
    </source>
</evidence>
<evidence type="ECO:0000256" key="3">
    <source>
        <dbReference type="SAM" id="MobiDB-lite"/>
    </source>
</evidence>
<evidence type="ECO:0000269" key="4">
    <source>
    </source>
</evidence>
<evidence type="ECO:0000269" key="5">
    <source>
    </source>
</evidence>
<evidence type="ECO:0000303" key="6">
    <source>
    </source>
</evidence>
<evidence type="ECO:0000305" key="7"/>
<evidence type="ECO:0000305" key="8">
    <source>
    </source>
</evidence>
<evidence type="ECO:0000305" key="9">
    <source>
    </source>
</evidence>
<evidence type="ECO:0000312" key="10">
    <source>
        <dbReference type="FlyBase" id="FBgn0085362"/>
    </source>
</evidence>
<evidence type="ECO:0000312" key="11">
    <source>
        <dbReference type="Proteomes" id="UP000000803"/>
    </source>
</evidence>
<gene>
    <name evidence="10" type="primary">Vml</name>
    <name evidence="6" type="synonym">CRM-80</name>
    <name evidence="10" type="ORF">CG34333</name>
</gene>
<name>VTUL_DROME</name>